<name>TEFM_DANRE</name>
<organism>
    <name type="scientific">Danio rerio</name>
    <name type="common">Zebrafish</name>
    <name type="synonym">Brachydanio rerio</name>
    <dbReference type="NCBI Taxonomy" id="7955"/>
    <lineage>
        <taxon>Eukaryota</taxon>
        <taxon>Metazoa</taxon>
        <taxon>Chordata</taxon>
        <taxon>Craniata</taxon>
        <taxon>Vertebrata</taxon>
        <taxon>Euteleostomi</taxon>
        <taxon>Actinopterygii</taxon>
        <taxon>Neopterygii</taxon>
        <taxon>Teleostei</taxon>
        <taxon>Ostariophysi</taxon>
        <taxon>Cypriniformes</taxon>
        <taxon>Danionidae</taxon>
        <taxon>Danioninae</taxon>
        <taxon>Danio</taxon>
    </lineage>
</organism>
<sequence length="363" mass="41156">MWIVKGILSSVVLKGHYSLFSRPPPSSLPDYALRFLHFTCCRSSKIMFSEFDSSNASISPELRQENAKALDSCYTEEQRAVILQRLNTATESELEQVKLLRGRKSVNIVKYRTRHGPFSSLESVINVPLLKYKSAIMVFDSILNPDNKRKRNKGKVHLAKFIKPDVNRAHLEDASSIISIVCGTNKIAWAHMDRARTVLDWQQAECQSFMKGTYLASDYLEDISSVISSFPAADFFLVEKPSISPQNTSLFPVMVHLRTVEAMLFALLSQAREPGSPPKVLNMMRISVGRHFDLMVGDCRTSGAETLRKMMTDSVMKRDPRVLFPHDLVLKHRNSFQMSSRNKGEEMCDALLQAVAFFELLQE</sequence>
<comment type="function">
    <text evidence="1">Transcription elongation factor which increases mitochondrial RNA polymerase processivity. Regulates transcription of the mitochondrial genome, including genes important for the oxidative phosphorylation machinery (By similarity).</text>
</comment>
<comment type="subcellular location">
    <subcellularLocation>
        <location evidence="1">Mitochondrion matrix</location>
    </subcellularLocation>
    <subcellularLocation>
        <location evidence="1">Mitochondrion matrix</location>
        <location evidence="1">Mitochondrion nucleoid</location>
    </subcellularLocation>
</comment>
<comment type="disruption phenotype">
    <text evidence="3">Morphants show reduced movement and have abnormal neuromuscular junction morphology compared to wild-type animals.</text>
</comment>
<comment type="similarity">
    <text evidence="4">Belongs to the TEFM family.</text>
</comment>
<feature type="transit peptide" description="Mitochondrion" evidence="2">
    <location>
        <begin position="1"/>
        <end position="23"/>
    </location>
</feature>
<feature type="chain" id="PRO_0000406332" description="Transcription elongation factor, mitochondrial">
    <location>
        <begin position="24"/>
        <end position="363"/>
    </location>
</feature>
<feature type="sequence conflict" description="In Ref. 2; AAI22137." evidence="4" ref="2">
    <original>P</original>
    <variation>S</variation>
    <location>
        <position position="60"/>
    </location>
</feature>
<feature type="sequence conflict" description="In Ref. 2; AAI22137." evidence="4" ref="2">
    <original>A</original>
    <variation>P</variation>
    <location>
        <position position="69"/>
    </location>
</feature>
<feature type="sequence conflict" description="In Ref. 2; AAI22137." evidence="4" ref="2">
    <original>C</original>
    <variation>R</variation>
    <location>
        <position position="73"/>
    </location>
</feature>
<feature type="sequence conflict" description="In Ref. 2; AAI22137." evidence="4" ref="2">
    <original>R</original>
    <variation>C</variation>
    <location>
        <position position="85"/>
    </location>
</feature>
<feature type="sequence conflict" description="In Ref. 2; AAI22137." evidence="4" ref="2">
    <original>I</original>
    <variation>V</variation>
    <location>
        <position position="136"/>
    </location>
</feature>
<accession>Q0P4D6</accession>
<accession>B0R1D7</accession>
<reference key="1">
    <citation type="journal article" date="2013" name="Nature">
        <title>The zebrafish reference genome sequence and its relationship to the human genome.</title>
        <authorList>
            <person name="Howe K."/>
            <person name="Clark M.D."/>
            <person name="Torroja C.F."/>
            <person name="Torrance J."/>
            <person name="Berthelot C."/>
            <person name="Muffato M."/>
            <person name="Collins J.E."/>
            <person name="Humphray S."/>
            <person name="McLaren K."/>
            <person name="Matthews L."/>
            <person name="McLaren S."/>
            <person name="Sealy I."/>
            <person name="Caccamo M."/>
            <person name="Churcher C."/>
            <person name="Scott C."/>
            <person name="Barrett J.C."/>
            <person name="Koch R."/>
            <person name="Rauch G.J."/>
            <person name="White S."/>
            <person name="Chow W."/>
            <person name="Kilian B."/>
            <person name="Quintais L.T."/>
            <person name="Guerra-Assuncao J.A."/>
            <person name="Zhou Y."/>
            <person name="Gu Y."/>
            <person name="Yen J."/>
            <person name="Vogel J.H."/>
            <person name="Eyre T."/>
            <person name="Redmond S."/>
            <person name="Banerjee R."/>
            <person name="Chi J."/>
            <person name="Fu B."/>
            <person name="Langley E."/>
            <person name="Maguire S.F."/>
            <person name="Laird G.K."/>
            <person name="Lloyd D."/>
            <person name="Kenyon E."/>
            <person name="Donaldson S."/>
            <person name="Sehra H."/>
            <person name="Almeida-King J."/>
            <person name="Loveland J."/>
            <person name="Trevanion S."/>
            <person name="Jones M."/>
            <person name="Quail M."/>
            <person name="Willey D."/>
            <person name="Hunt A."/>
            <person name="Burton J."/>
            <person name="Sims S."/>
            <person name="McLay K."/>
            <person name="Plumb B."/>
            <person name="Davis J."/>
            <person name="Clee C."/>
            <person name="Oliver K."/>
            <person name="Clark R."/>
            <person name="Riddle C."/>
            <person name="Elliot D."/>
            <person name="Threadgold G."/>
            <person name="Harden G."/>
            <person name="Ware D."/>
            <person name="Begum S."/>
            <person name="Mortimore B."/>
            <person name="Kerry G."/>
            <person name="Heath P."/>
            <person name="Phillimore B."/>
            <person name="Tracey A."/>
            <person name="Corby N."/>
            <person name="Dunn M."/>
            <person name="Johnson C."/>
            <person name="Wood J."/>
            <person name="Clark S."/>
            <person name="Pelan S."/>
            <person name="Griffiths G."/>
            <person name="Smith M."/>
            <person name="Glithero R."/>
            <person name="Howden P."/>
            <person name="Barker N."/>
            <person name="Lloyd C."/>
            <person name="Stevens C."/>
            <person name="Harley J."/>
            <person name="Holt K."/>
            <person name="Panagiotidis G."/>
            <person name="Lovell J."/>
            <person name="Beasley H."/>
            <person name="Henderson C."/>
            <person name="Gordon D."/>
            <person name="Auger K."/>
            <person name="Wright D."/>
            <person name="Collins J."/>
            <person name="Raisen C."/>
            <person name="Dyer L."/>
            <person name="Leung K."/>
            <person name="Robertson L."/>
            <person name="Ambridge K."/>
            <person name="Leongamornlert D."/>
            <person name="McGuire S."/>
            <person name="Gilderthorp R."/>
            <person name="Griffiths C."/>
            <person name="Manthravadi D."/>
            <person name="Nichol S."/>
            <person name="Barker G."/>
            <person name="Whitehead S."/>
            <person name="Kay M."/>
            <person name="Brown J."/>
            <person name="Murnane C."/>
            <person name="Gray E."/>
            <person name="Humphries M."/>
            <person name="Sycamore N."/>
            <person name="Barker D."/>
            <person name="Saunders D."/>
            <person name="Wallis J."/>
            <person name="Babbage A."/>
            <person name="Hammond S."/>
            <person name="Mashreghi-Mohammadi M."/>
            <person name="Barr L."/>
            <person name="Martin S."/>
            <person name="Wray P."/>
            <person name="Ellington A."/>
            <person name="Matthews N."/>
            <person name="Ellwood M."/>
            <person name="Woodmansey R."/>
            <person name="Clark G."/>
            <person name="Cooper J."/>
            <person name="Tromans A."/>
            <person name="Grafham D."/>
            <person name="Skuce C."/>
            <person name="Pandian R."/>
            <person name="Andrews R."/>
            <person name="Harrison E."/>
            <person name="Kimberley A."/>
            <person name="Garnett J."/>
            <person name="Fosker N."/>
            <person name="Hall R."/>
            <person name="Garner P."/>
            <person name="Kelly D."/>
            <person name="Bird C."/>
            <person name="Palmer S."/>
            <person name="Gehring I."/>
            <person name="Berger A."/>
            <person name="Dooley C.M."/>
            <person name="Ersan-Urun Z."/>
            <person name="Eser C."/>
            <person name="Geiger H."/>
            <person name="Geisler M."/>
            <person name="Karotki L."/>
            <person name="Kirn A."/>
            <person name="Konantz J."/>
            <person name="Konantz M."/>
            <person name="Oberlander M."/>
            <person name="Rudolph-Geiger S."/>
            <person name="Teucke M."/>
            <person name="Lanz C."/>
            <person name="Raddatz G."/>
            <person name="Osoegawa K."/>
            <person name="Zhu B."/>
            <person name="Rapp A."/>
            <person name="Widaa S."/>
            <person name="Langford C."/>
            <person name="Yang F."/>
            <person name="Schuster S.C."/>
            <person name="Carter N.P."/>
            <person name="Harrow J."/>
            <person name="Ning Z."/>
            <person name="Herrero J."/>
            <person name="Searle S.M."/>
            <person name="Enright A."/>
            <person name="Geisler R."/>
            <person name="Plasterk R.H."/>
            <person name="Lee C."/>
            <person name="Westerfield M."/>
            <person name="de Jong P.J."/>
            <person name="Zon L.I."/>
            <person name="Postlethwait J.H."/>
            <person name="Nusslein-Volhard C."/>
            <person name="Hubbard T.J."/>
            <person name="Roest Crollius H."/>
            <person name="Rogers J."/>
            <person name="Stemple D.L."/>
        </authorList>
    </citation>
    <scope>NUCLEOTIDE SEQUENCE [LARGE SCALE GENOMIC DNA]</scope>
    <source>
        <strain>Tuebingen</strain>
    </source>
</reference>
<reference key="2">
    <citation type="submission" date="2006-08" db="EMBL/GenBank/DDBJ databases">
        <authorList>
            <consortium name="NIH - Zebrafish Gene Collection (ZGC) project"/>
        </authorList>
    </citation>
    <scope>NUCLEOTIDE SEQUENCE [LARGE SCALE MRNA]</scope>
    <source>
        <tissue>Ovary</tissue>
    </source>
</reference>
<reference key="3">
    <citation type="journal article" date="2023" name="Nat. Commun.">
        <title>TEFM variants impair mitochondrial transcription causing childhood-onset neurological disease.</title>
        <authorList>
            <person name="Van Haute L."/>
            <person name="O'Connor E."/>
            <person name="Diaz-Maldonado H."/>
            <person name="Munro B."/>
            <person name="Polavarapu K."/>
            <person name="Hock D.H."/>
            <person name="Arunachal G."/>
            <person name="Athanasiou-Fragkouli A."/>
            <person name="Bardhan M."/>
            <person name="Barth M."/>
            <person name="Bonneau D."/>
            <person name="Brunetti-Pierri N."/>
            <person name="Cappuccio G."/>
            <person name="Caruana N.J."/>
            <person name="Dominik N."/>
            <person name="Goel H."/>
            <person name="Helman G."/>
            <person name="Houlden H."/>
            <person name="Lenaers G."/>
            <person name="Mention K."/>
            <person name="Murphy D."/>
            <person name="Nandeesh B."/>
            <person name="Olimpio C."/>
            <person name="Powell C.A."/>
            <person name="Preethish-Kumar V."/>
            <person name="Procaccio V."/>
            <person name="Rius R."/>
            <person name="Rebelo-Guiomar P."/>
            <person name="Simons C."/>
            <person name="Vengalil S."/>
            <person name="Zaki M.S."/>
            <person name="Ziegler A."/>
            <person name="Thorburn D.R."/>
            <person name="Stroud D.A."/>
            <person name="Maroofian R."/>
            <person name="Christodoulou J."/>
            <person name="Gustafsson C."/>
            <person name="Nalini A."/>
            <person name="Lochmueller H."/>
            <person name="Minczuk M."/>
            <person name="Horvath R."/>
        </authorList>
    </citation>
    <scope>DISRUPTION PHENOTYPE</scope>
</reference>
<keyword id="KW-0496">Mitochondrion</keyword>
<keyword id="KW-1135">Mitochondrion nucleoid</keyword>
<keyword id="KW-1185">Reference proteome</keyword>
<keyword id="KW-0804">Transcription</keyword>
<keyword id="KW-0805">Transcription regulation</keyword>
<keyword id="KW-0809">Transit peptide</keyword>
<gene>
    <name type="primary">tefm</name>
    <name type="ORF">si:dkey-10p5.4</name>
    <name type="ORF">zgc:153083</name>
</gene>
<evidence type="ECO:0000250" key="1">
    <source>
        <dbReference type="UniProtKB" id="Q96QE5"/>
    </source>
</evidence>
<evidence type="ECO:0000255" key="2"/>
<evidence type="ECO:0000269" key="3">
    <source>
    </source>
</evidence>
<evidence type="ECO:0000305" key="4"/>
<protein>
    <recommendedName>
        <fullName>Transcription elongation factor, mitochondrial</fullName>
    </recommendedName>
</protein>
<proteinExistence type="evidence at transcript level"/>
<dbReference type="EMBL" id="AL954746">
    <property type="protein sequence ID" value="CAQ15135.1"/>
    <property type="molecule type" value="Genomic_DNA"/>
</dbReference>
<dbReference type="EMBL" id="BC122136">
    <property type="protein sequence ID" value="AAI22137.1"/>
    <property type="molecule type" value="mRNA"/>
</dbReference>
<dbReference type="RefSeq" id="NP_001073495.1">
    <property type="nucleotide sequence ID" value="NM_001080026.1"/>
</dbReference>
<dbReference type="SMR" id="Q0P4D6"/>
<dbReference type="FunCoup" id="Q0P4D6">
    <property type="interactions" value="403"/>
</dbReference>
<dbReference type="STRING" id="7955.ENSDARP00000141794"/>
<dbReference type="PaxDb" id="7955-ENSDARP00000106828"/>
<dbReference type="Ensembl" id="ENSDART00000168636">
    <property type="protein sequence ID" value="ENSDARP00000141794"/>
    <property type="gene ID" value="ENSDARG00000100548"/>
</dbReference>
<dbReference type="Ensembl" id="ENSDART00000180084">
    <property type="protein sequence ID" value="ENSDARP00000150041"/>
    <property type="gene ID" value="ENSDARG00000114872"/>
</dbReference>
<dbReference type="GeneID" id="566236"/>
<dbReference type="KEGG" id="dre:566236"/>
<dbReference type="AGR" id="ZFIN:ZDB-GENE-060825-345"/>
<dbReference type="CTD" id="79736"/>
<dbReference type="ZFIN" id="ZDB-GENE-060825-345">
    <property type="gene designation" value="tefm"/>
</dbReference>
<dbReference type="eggNOG" id="ENOG502QPVB">
    <property type="taxonomic scope" value="Eukaryota"/>
</dbReference>
<dbReference type="HOGENOM" id="CLU_066790_0_0_1"/>
<dbReference type="InParanoid" id="Q0P4D6"/>
<dbReference type="OMA" id="LILRTHY"/>
<dbReference type="OrthoDB" id="5949570at2759"/>
<dbReference type="PhylomeDB" id="Q0P4D6"/>
<dbReference type="TreeFam" id="TF325413"/>
<dbReference type="PRO" id="PR:Q0P4D6"/>
<dbReference type="Proteomes" id="UP000000437">
    <property type="component" value="Alternate scaffold 6"/>
</dbReference>
<dbReference type="Proteomes" id="UP000000437">
    <property type="component" value="Chromosome 6"/>
</dbReference>
<dbReference type="Bgee" id="ENSDARG00000100548">
    <property type="expression patterns" value="Expressed in liver and 22 other cell types or tissues"/>
</dbReference>
<dbReference type="GO" id="GO:0005759">
    <property type="term" value="C:mitochondrial matrix"/>
    <property type="evidence" value="ECO:0000250"/>
    <property type="project" value="UniProtKB"/>
</dbReference>
<dbReference type="GO" id="GO:0042645">
    <property type="term" value="C:mitochondrial nucleoid"/>
    <property type="evidence" value="ECO:0000250"/>
    <property type="project" value="UniProtKB"/>
</dbReference>
<dbReference type="GO" id="GO:1990904">
    <property type="term" value="C:ribonucleoprotein complex"/>
    <property type="evidence" value="ECO:0000250"/>
    <property type="project" value="UniProtKB"/>
</dbReference>
<dbReference type="GO" id="GO:0030337">
    <property type="term" value="F:DNA polymerase processivity factor activity"/>
    <property type="evidence" value="ECO:0000318"/>
    <property type="project" value="GO_Central"/>
</dbReference>
<dbReference type="GO" id="GO:0003676">
    <property type="term" value="F:nucleic acid binding"/>
    <property type="evidence" value="ECO:0007669"/>
    <property type="project" value="InterPro"/>
</dbReference>
<dbReference type="GO" id="GO:0003711">
    <property type="term" value="F:transcription elongation factor activity"/>
    <property type="evidence" value="ECO:0000250"/>
    <property type="project" value="UniProtKB"/>
</dbReference>
<dbReference type="GO" id="GO:0006390">
    <property type="term" value="P:mitochondrial transcription"/>
    <property type="evidence" value="ECO:0000318"/>
    <property type="project" value="GO_Central"/>
</dbReference>
<dbReference type="GO" id="GO:1903109">
    <property type="term" value="P:positive regulation of mitochondrial transcription"/>
    <property type="evidence" value="ECO:0000250"/>
    <property type="project" value="UniProtKB"/>
</dbReference>
<dbReference type="GO" id="GO:0006392">
    <property type="term" value="P:transcription elongation by mitochondrial RNA polymerase"/>
    <property type="evidence" value="ECO:0007669"/>
    <property type="project" value="InterPro"/>
</dbReference>
<dbReference type="Gene3D" id="3.30.420.10">
    <property type="entry name" value="Ribonuclease H-like superfamily/Ribonuclease H"/>
    <property type="match status" value="1"/>
</dbReference>
<dbReference type="InterPro" id="IPR036397">
    <property type="entry name" value="RNaseH_sf"/>
</dbReference>
<dbReference type="InterPro" id="IPR010994">
    <property type="entry name" value="RuvA_2-like"/>
</dbReference>
<dbReference type="InterPro" id="IPR039150">
    <property type="entry name" value="TEFM"/>
</dbReference>
<dbReference type="PANTHER" id="PTHR21053">
    <property type="entry name" value="TRANSCRIPTION ELONGATION FACTOR, MITOCHONDRIAL"/>
    <property type="match status" value="1"/>
</dbReference>
<dbReference type="PANTHER" id="PTHR21053:SF2">
    <property type="entry name" value="TRANSCRIPTION ELONGATION FACTOR, MITOCHONDRIAL"/>
    <property type="match status" value="1"/>
</dbReference>
<dbReference type="Pfam" id="PF12836">
    <property type="entry name" value="HHH_3"/>
    <property type="match status" value="1"/>
</dbReference>
<dbReference type="SUPFAM" id="SSF47781">
    <property type="entry name" value="RuvA domain 2-like"/>
    <property type="match status" value="1"/>
</dbReference>